<gene>
    <name evidence="1" type="primary">murB</name>
    <name type="ordered locus">Pden_4491</name>
</gene>
<sequence>MTQTLPTPRGSLTPNRTLADLTWLRVGGPADWLFQPADEADLAAFLAALDPAIPVFPMGVGSNLIVRDGGIRGVVIRLGRGFNAIACEGGTVTAGAAALDAHVARRAAEAGLDLTFLRTIPGSIGGAVRMNAGCYGTYVADHLVSVRAVARDGSLHEIAAADLRFGYRHSDLPEGWVVIEARFRAEPGDPAELAARMEEQLARRDASQPTKDRSAGSTFRNPAGYSSTGRADDSHELKAWTLIDAAGLRGHRLGGAQMSEKHPNFLLNAGGATAAELEALGELVRRKVRETSGHELKWEVIRVGRP</sequence>
<protein>
    <recommendedName>
        <fullName evidence="1">UDP-N-acetylenolpyruvoylglucosamine reductase</fullName>
        <ecNumber evidence="1">1.3.1.98</ecNumber>
    </recommendedName>
    <alternativeName>
        <fullName evidence="1">UDP-N-acetylmuramate dehydrogenase</fullName>
    </alternativeName>
</protein>
<keyword id="KW-0131">Cell cycle</keyword>
<keyword id="KW-0132">Cell division</keyword>
<keyword id="KW-0133">Cell shape</keyword>
<keyword id="KW-0961">Cell wall biogenesis/degradation</keyword>
<keyword id="KW-0963">Cytoplasm</keyword>
<keyword id="KW-0274">FAD</keyword>
<keyword id="KW-0285">Flavoprotein</keyword>
<keyword id="KW-0521">NADP</keyword>
<keyword id="KW-0560">Oxidoreductase</keyword>
<keyword id="KW-0573">Peptidoglycan synthesis</keyword>
<keyword id="KW-1185">Reference proteome</keyword>
<organism>
    <name type="scientific">Paracoccus denitrificans (strain Pd 1222)</name>
    <dbReference type="NCBI Taxonomy" id="318586"/>
    <lineage>
        <taxon>Bacteria</taxon>
        <taxon>Pseudomonadati</taxon>
        <taxon>Pseudomonadota</taxon>
        <taxon>Alphaproteobacteria</taxon>
        <taxon>Rhodobacterales</taxon>
        <taxon>Paracoccaceae</taxon>
        <taxon>Paracoccus</taxon>
    </lineage>
</organism>
<feature type="chain" id="PRO_0000332486" description="UDP-N-acetylenolpyruvoylglucosamine reductase">
    <location>
        <begin position="1"/>
        <end position="306"/>
    </location>
</feature>
<feature type="domain" description="FAD-binding PCMH-type" evidence="1">
    <location>
        <begin position="25"/>
        <end position="188"/>
    </location>
</feature>
<feature type="region of interest" description="Disordered" evidence="2">
    <location>
        <begin position="199"/>
        <end position="232"/>
    </location>
</feature>
<feature type="compositionally biased region" description="Basic and acidic residues" evidence="2">
    <location>
        <begin position="199"/>
        <end position="214"/>
    </location>
</feature>
<feature type="compositionally biased region" description="Polar residues" evidence="2">
    <location>
        <begin position="215"/>
        <end position="229"/>
    </location>
</feature>
<feature type="active site" evidence="1">
    <location>
        <position position="168"/>
    </location>
</feature>
<feature type="active site" description="Proton donor" evidence="1">
    <location>
        <position position="217"/>
    </location>
</feature>
<feature type="active site" evidence="1">
    <location>
        <position position="299"/>
    </location>
</feature>
<proteinExistence type="inferred from homology"/>
<comment type="function">
    <text evidence="1">Cell wall formation.</text>
</comment>
<comment type="catalytic activity">
    <reaction evidence="1">
        <text>UDP-N-acetyl-alpha-D-muramate + NADP(+) = UDP-N-acetyl-3-O-(1-carboxyvinyl)-alpha-D-glucosamine + NADPH + H(+)</text>
        <dbReference type="Rhea" id="RHEA:12248"/>
        <dbReference type="ChEBI" id="CHEBI:15378"/>
        <dbReference type="ChEBI" id="CHEBI:57783"/>
        <dbReference type="ChEBI" id="CHEBI:58349"/>
        <dbReference type="ChEBI" id="CHEBI:68483"/>
        <dbReference type="ChEBI" id="CHEBI:70757"/>
        <dbReference type="EC" id="1.3.1.98"/>
    </reaction>
</comment>
<comment type="cofactor">
    <cofactor evidence="1">
        <name>FAD</name>
        <dbReference type="ChEBI" id="CHEBI:57692"/>
    </cofactor>
</comment>
<comment type="pathway">
    <text evidence="1">Cell wall biogenesis; peptidoglycan biosynthesis.</text>
</comment>
<comment type="subcellular location">
    <subcellularLocation>
        <location evidence="1">Cytoplasm</location>
    </subcellularLocation>
</comment>
<comment type="similarity">
    <text evidence="1">Belongs to the MurB family.</text>
</comment>
<name>MURB_PARDP</name>
<dbReference type="EC" id="1.3.1.98" evidence="1"/>
<dbReference type="EMBL" id="CP000490">
    <property type="protein sequence ID" value="ABL72555.1"/>
    <property type="molecule type" value="Genomic_DNA"/>
</dbReference>
<dbReference type="RefSeq" id="WP_011750716.1">
    <property type="nucleotide sequence ID" value="NC_008687.1"/>
</dbReference>
<dbReference type="SMR" id="A1BAL1"/>
<dbReference type="STRING" id="318586.Pden_4491"/>
<dbReference type="EnsemblBacteria" id="ABL72555">
    <property type="protein sequence ID" value="ABL72555"/>
    <property type="gene ID" value="Pden_4491"/>
</dbReference>
<dbReference type="GeneID" id="93454156"/>
<dbReference type="KEGG" id="pde:Pden_4491"/>
<dbReference type="eggNOG" id="COG0812">
    <property type="taxonomic scope" value="Bacteria"/>
</dbReference>
<dbReference type="HOGENOM" id="CLU_035304_1_0_5"/>
<dbReference type="OrthoDB" id="9804753at2"/>
<dbReference type="UniPathway" id="UPA00219"/>
<dbReference type="Proteomes" id="UP000000361">
    <property type="component" value="Chromosome 2"/>
</dbReference>
<dbReference type="GO" id="GO:0005829">
    <property type="term" value="C:cytosol"/>
    <property type="evidence" value="ECO:0007669"/>
    <property type="project" value="TreeGrafter"/>
</dbReference>
<dbReference type="GO" id="GO:0071949">
    <property type="term" value="F:FAD binding"/>
    <property type="evidence" value="ECO:0007669"/>
    <property type="project" value="InterPro"/>
</dbReference>
<dbReference type="GO" id="GO:0008762">
    <property type="term" value="F:UDP-N-acetylmuramate dehydrogenase activity"/>
    <property type="evidence" value="ECO:0007669"/>
    <property type="project" value="UniProtKB-UniRule"/>
</dbReference>
<dbReference type="GO" id="GO:0051301">
    <property type="term" value="P:cell division"/>
    <property type="evidence" value="ECO:0007669"/>
    <property type="project" value="UniProtKB-KW"/>
</dbReference>
<dbReference type="GO" id="GO:0071555">
    <property type="term" value="P:cell wall organization"/>
    <property type="evidence" value="ECO:0007669"/>
    <property type="project" value="UniProtKB-KW"/>
</dbReference>
<dbReference type="GO" id="GO:0009252">
    <property type="term" value="P:peptidoglycan biosynthetic process"/>
    <property type="evidence" value="ECO:0007669"/>
    <property type="project" value="UniProtKB-UniRule"/>
</dbReference>
<dbReference type="GO" id="GO:0008360">
    <property type="term" value="P:regulation of cell shape"/>
    <property type="evidence" value="ECO:0007669"/>
    <property type="project" value="UniProtKB-KW"/>
</dbReference>
<dbReference type="Gene3D" id="3.30.465.10">
    <property type="match status" value="1"/>
</dbReference>
<dbReference type="Gene3D" id="3.90.78.10">
    <property type="entry name" value="UDP-N-acetylenolpyruvoylglucosamine reductase, C-terminal domain"/>
    <property type="match status" value="1"/>
</dbReference>
<dbReference type="Gene3D" id="3.30.43.10">
    <property type="entry name" value="Uridine Diphospho-n-acetylenolpyruvylglucosamine Reductase, domain 2"/>
    <property type="match status" value="1"/>
</dbReference>
<dbReference type="HAMAP" id="MF_00037">
    <property type="entry name" value="MurB"/>
    <property type="match status" value="1"/>
</dbReference>
<dbReference type="InterPro" id="IPR016166">
    <property type="entry name" value="FAD-bd_PCMH"/>
</dbReference>
<dbReference type="InterPro" id="IPR036318">
    <property type="entry name" value="FAD-bd_PCMH-like_sf"/>
</dbReference>
<dbReference type="InterPro" id="IPR016167">
    <property type="entry name" value="FAD-bd_PCMH_sub1"/>
</dbReference>
<dbReference type="InterPro" id="IPR016169">
    <property type="entry name" value="FAD-bd_PCMH_sub2"/>
</dbReference>
<dbReference type="InterPro" id="IPR003170">
    <property type="entry name" value="MurB"/>
</dbReference>
<dbReference type="InterPro" id="IPR011601">
    <property type="entry name" value="MurB_C"/>
</dbReference>
<dbReference type="InterPro" id="IPR036635">
    <property type="entry name" value="MurB_C_sf"/>
</dbReference>
<dbReference type="InterPro" id="IPR006094">
    <property type="entry name" value="Oxid_FAD_bind_N"/>
</dbReference>
<dbReference type="NCBIfam" id="TIGR00179">
    <property type="entry name" value="murB"/>
    <property type="match status" value="1"/>
</dbReference>
<dbReference type="NCBIfam" id="NF010480">
    <property type="entry name" value="PRK13905.1"/>
    <property type="match status" value="1"/>
</dbReference>
<dbReference type="PANTHER" id="PTHR21071">
    <property type="entry name" value="UDP-N-ACETYLENOLPYRUVOYLGLUCOSAMINE REDUCTASE"/>
    <property type="match status" value="1"/>
</dbReference>
<dbReference type="PANTHER" id="PTHR21071:SF4">
    <property type="entry name" value="UDP-N-ACETYLENOLPYRUVOYLGLUCOSAMINE REDUCTASE"/>
    <property type="match status" value="1"/>
</dbReference>
<dbReference type="Pfam" id="PF01565">
    <property type="entry name" value="FAD_binding_4"/>
    <property type="match status" value="1"/>
</dbReference>
<dbReference type="Pfam" id="PF02873">
    <property type="entry name" value="MurB_C"/>
    <property type="match status" value="1"/>
</dbReference>
<dbReference type="SUPFAM" id="SSF56176">
    <property type="entry name" value="FAD-binding/transporter-associated domain-like"/>
    <property type="match status" value="1"/>
</dbReference>
<dbReference type="SUPFAM" id="SSF56194">
    <property type="entry name" value="Uridine diphospho-N-Acetylenolpyruvylglucosamine reductase, MurB, C-terminal domain"/>
    <property type="match status" value="1"/>
</dbReference>
<dbReference type="PROSITE" id="PS51387">
    <property type="entry name" value="FAD_PCMH"/>
    <property type="match status" value="1"/>
</dbReference>
<reference key="1">
    <citation type="submission" date="2006-12" db="EMBL/GenBank/DDBJ databases">
        <title>Complete sequence of chromosome 2 of Paracoccus denitrificans PD1222.</title>
        <authorList>
            <person name="Copeland A."/>
            <person name="Lucas S."/>
            <person name="Lapidus A."/>
            <person name="Barry K."/>
            <person name="Detter J.C."/>
            <person name="Glavina del Rio T."/>
            <person name="Hammon N."/>
            <person name="Israni S."/>
            <person name="Dalin E."/>
            <person name="Tice H."/>
            <person name="Pitluck S."/>
            <person name="Munk A.C."/>
            <person name="Brettin T."/>
            <person name="Bruce D."/>
            <person name="Han C."/>
            <person name="Tapia R."/>
            <person name="Gilna P."/>
            <person name="Schmutz J."/>
            <person name="Larimer F."/>
            <person name="Land M."/>
            <person name="Hauser L."/>
            <person name="Kyrpides N."/>
            <person name="Lykidis A."/>
            <person name="Spiro S."/>
            <person name="Richardson D.J."/>
            <person name="Moir J.W.B."/>
            <person name="Ferguson S.J."/>
            <person name="van Spanning R.J.M."/>
            <person name="Richardson P."/>
        </authorList>
    </citation>
    <scope>NUCLEOTIDE SEQUENCE [LARGE SCALE GENOMIC DNA]</scope>
    <source>
        <strain>Pd 1222</strain>
    </source>
</reference>
<accession>A1BAL1</accession>
<evidence type="ECO:0000255" key="1">
    <source>
        <dbReference type="HAMAP-Rule" id="MF_00037"/>
    </source>
</evidence>
<evidence type="ECO:0000256" key="2">
    <source>
        <dbReference type="SAM" id="MobiDB-lite"/>
    </source>
</evidence>